<organism>
    <name type="scientific">Bacillus pumilus (strain SAFR-032)</name>
    <dbReference type="NCBI Taxonomy" id="315750"/>
    <lineage>
        <taxon>Bacteria</taxon>
        <taxon>Bacillati</taxon>
        <taxon>Bacillota</taxon>
        <taxon>Bacilli</taxon>
        <taxon>Bacillales</taxon>
        <taxon>Bacillaceae</taxon>
        <taxon>Bacillus</taxon>
    </lineage>
</organism>
<gene>
    <name evidence="2" type="primary">uvsE</name>
    <name type="ordered locus">BPUM_3376</name>
</gene>
<name>UVSE_BACP2</name>
<evidence type="ECO:0000250" key="1"/>
<evidence type="ECO:0000255" key="2">
    <source>
        <dbReference type="HAMAP-Rule" id="MF_00606"/>
    </source>
</evidence>
<protein>
    <recommendedName>
        <fullName evidence="2">UV DNA damage endonuclease</fullName>
        <shortName evidence="2">UV-endonuclease</shortName>
        <shortName evidence="2">UVED</shortName>
        <ecNumber evidence="2">3.-.-.-</ecNumber>
    </recommendedName>
</protein>
<comment type="function">
    <text evidence="1">Component in a DNA repair pathway. Removal of UV LIGHT damaged nucleotides. Recognizes pyrimidine dimers and cleave a phosphodiester bond immediately 5' to the lesion (By similarity).</text>
</comment>
<comment type="similarity">
    <text evidence="2">Belongs to the uve1/UvsE family.</text>
</comment>
<keyword id="KW-0227">DNA damage</keyword>
<keyword id="KW-0228">DNA excision</keyword>
<keyword id="KW-0234">DNA repair</keyword>
<keyword id="KW-0255">Endonuclease</keyword>
<keyword id="KW-0378">Hydrolase</keyword>
<keyword id="KW-0540">Nuclease</keyword>
<proteinExistence type="inferred from homology"/>
<feature type="chain" id="PRO_1000061276" description="UV DNA damage endonuclease">
    <location>
        <begin position="1"/>
        <end position="320"/>
    </location>
</feature>
<accession>A8FIG1</accession>
<sequence>MRYRFGYVSNAVTLWEASPAKSLTFARYSKLSKEEGKEALLRTTKANLVNTLRTLYFAISHDIPLYRFSSSIVPLATHPEVRWDFVTPFQKEFLEIGDLVKRHGLRVSFHPNQFTLFTSPKPSITENAVIDMTYHYQMLEAMKLEKEGYMNIHVGGAYGDKDSALQRFDENIKQLPAHIKARMTLENDDKTYTSLETLGVCEKHGIPFVFDYHHHVANKDDNAALEDILPRMFDTWTSTGIPPKIHLSSPKSEKAIRSHADGVDMSFVLPLFHALKPCGRDVDFMIEAKLKDQALLRLVEELSAIRGNKRVGGGTIEWKP</sequence>
<reference key="1">
    <citation type="journal article" date="2007" name="PLoS ONE">
        <title>Paradoxical DNA repair and peroxide resistance gene conservation in Bacillus pumilus SAFR-032.</title>
        <authorList>
            <person name="Gioia J."/>
            <person name="Yerrapragada S."/>
            <person name="Qin X."/>
            <person name="Jiang H."/>
            <person name="Igboeli O.C."/>
            <person name="Muzny D."/>
            <person name="Dugan-Rocha S."/>
            <person name="Ding Y."/>
            <person name="Hawes A."/>
            <person name="Liu W."/>
            <person name="Perez L."/>
            <person name="Kovar C."/>
            <person name="Dinh H."/>
            <person name="Lee S."/>
            <person name="Nazareth L."/>
            <person name="Blyth P."/>
            <person name="Holder M."/>
            <person name="Buhay C."/>
            <person name="Tirumalai M.R."/>
            <person name="Liu Y."/>
            <person name="Dasgupta I."/>
            <person name="Bokhetache L."/>
            <person name="Fujita M."/>
            <person name="Karouia F."/>
            <person name="Eswara Moorthy P."/>
            <person name="Siefert J."/>
            <person name="Uzman A."/>
            <person name="Buzumbo P."/>
            <person name="Verma A."/>
            <person name="Zwiya H."/>
            <person name="McWilliams B.D."/>
            <person name="Olowu A."/>
            <person name="Clinkenbeard K.D."/>
            <person name="Newcombe D."/>
            <person name="Golebiewski L."/>
            <person name="Petrosino J.F."/>
            <person name="Nicholson W.L."/>
            <person name="Fox G.E."/>
            <person name="Venkateswaran K."/>
            <person name="Highlander S.K."/>
            <person name="Weinstock G.M."/>
        </authorList>
    </citation>
    <scope>NUCLEOTIDE SEQUENCE [LARGE SCALE GENOMIC DNA]</scope>
    <source>
        <strain>SAFR-032</strain>
    </source>
</reference>
<dbReference type="EC" id="3.-.-.-" evidence="2"/>
<dbReference type="EMBL" id="CP000813">
    <property type="protein sequence ID" value="ABV64028.1"/>
    <property type="molecule type" value="Genomic_DNA"/>
</dbReference>
<dbReference type="RefSeq" id="WP_012011587.1">
    <property type="nucleotide sequence ID" value="NZ_VEIA01000001.1"/>
</dbReference>
<dbReference type="SMR" id="A8FIG1"/>
<dbReference type="STRING" id="315750.BPUM_3376"/>
<dbReference type="GeneID" id="5622666"/>
<dbReference type="KEGG" id="bpu:BPUM_3376"/>
<dbReference type="eggNOG" id="COG4294">
    <property type="taxonomic scope" value="Bacteria"/>
</dbReference>
<dbReference type="HOGENOM" id="CLU_017168_0_1_9"/>
<dbReference type="OrthoDB" id="9782576at2"/>
<dbReference type="Proteomes" id="UP000001355">
    <property type="component" value="Chromosome"/>
</dbReference>
<dbReference type="GO" id="GO:0004519">
    <property type="term" value="F:endonuclease activity"/>
    <property type="evidence" value="ECO:0007669"/>
    <property type="project" value="UniProtKB-UniRule"/>
</dbReference>
<dbReference type="GO" id="GO:0006289">
    <property type="term" value="P:nucleotide-excision repair"/>
    <property type="evidence" value="ECO:0007669"/>
    <property type="project" value="InterPro"/>
</dbReference>
<dbReference type="GO" id="GO:0006290">
    <property type="term" value="P:pyrimidine dimer repair"/>
    <property type="evidence" value="ECO:0007669"/>
    <property type="project" value="UniProtKB-UniRule"/>
</dbReference>
<dbReference type="GO" id="GO:0009411">
    <property type="term" value="P:response to UV"/>
    <property type="evidence" value="ECO:0007669"/>
    <property type="project" value="InterPro"/>
</dbReference>
<dbReference type="Gene3D" id="3.20.20.150">
    <property type="entry name" value="Divalent-metal-dependent TIM barrel enzymes"/>
    <property type="match status" value="1"/>
</dbReference>
<dbReference type="HAMAP" id="MF_00606">
    <property type="entry name" value="UV_endonuclease"/>
    <property type="match status" value="1"/>
</dbReference>
<dbReference type="InterPro" id="IPR004601">
    <property type="entry name" value="UvdE"/>
</dbReference>
<dbReference type="InterPro" id="IPR023520">
    <property type="entry name" value="UvdE_bac"/>
</dbReference>
<dbReference type="InterPro" id="IPR036237">
    <property type="entry name" value="Xyl_isomerase-like_sf"/>
</dbReference>
<dbReference type="NCBIfam" id="TIGR00629">
    <property type="entry name" value="uvde"/>
    <property type="match status" value="1"/>
</dbReference>
<dbReference type="PANTHER" id="PTHR31290">
    <property type="entry name" value="UV-DAMAGE ENDONUCLEASE"/>
    <property type="match status" value="1"/>
</dbReference>
<dbReference type="PANTHER" id="PTHR31290:SF5">
    <property type="entry name" value="UV-DAMAGE ENDONUCLEASE"/>
    <property type="match status" value="1"/>
</dbReference>
<dbReference type="Pfam" id="PF03851">
    <property type="entry name" value="UvdE"/>
    <property type="match status" value="1"/>
</dbReference>
<dbReference type="SUPFAM" id="SSF51658">
    <property type="entry name" value="Xylose isomerase-like"/>
    <property type="match status" value="1"/>
</dbReference>